<accession>A8Z3U9</accession>
<gene>
    <name evidence="2" type="primary">infB</name>
    <name type="ordered locus">USA300HOU_1201</name>
</gene>
<keyword id="KW-0963">Cytoplasm</keyword>
<keyword id="KW-0342">GTP-binding</keyword>
<keyword id="KW-0396">Initiation factor</keyword>
<keyword id="KW-0547">Nucleotide-binding</keyword>
<keyword id="KW-0648">Protein biosynthesis</keyword>
<protein>
    <recommendedName>
        <fullName evidence="2">Translation initiation factor IF-2</fullName>
    </recommendedName>
</protein>
<organism>
    <name type="scientific">Staphylococcus aureus (strain USA300 / TCH1516)</name>
    <dbReference type="NCBI Taxonomy" id="451516"/>
    <lineage>
        <taxon>Bacteria</taxon>
        <taxon>Bacillati</taxon>
        <taxon>Bacillota</taxon>
        <taxon>Bacilli</taxon>
        <taxon>Bacillales</taxon>
        <taxon>Staphylococcaceae</taxon>
        <taxon>Staphylococcus</taxon>
    </lineage>
</organism>
<reference key="1">
    <citation type="journal article" date="2007" name="BMC Microbiol.">
        <title>Subtle genetic changes enhance virulence of methicillin resistant and sensitive Staphylococcus aureus.</title>
        <authorList>
            <person name="Highlander S.K."/>
            <person name="Hulten K.G."/>
            <person name="Qin X."/>
            <person name="Jiang H."/>
            <person name="Yerrapragada S."/>
            <person name="Mason E.O. Jr."/>
            <person name="Shang Y."/>
            <person name="Williams T.M."/>
            <person name="Fortunov R.M."/>
            <person name="Liu Y."/>
            <person name="Igboeli O."/>
            <person name="Petrosino J."/>
            <person name="Tirumalai M."/>
            <person name="Uzman A."/>
            <person name="Fox G.E."/>
            <person name="Cardenas A.M."/>
            <person name="Muzny D.M."/>
            <person name="Hemphill L."/>
            <person name="Ding Y."/>
            <person name="Dugan S."/>
            <person name="Blyth P.R."/>
            <person name="Buhay C.J."/>
            <person name="Dinh H.H."/>
            <person name="Hawes A.C."/>
            <person name="Holder M."/>
            <person name="Kovar C.L."/>
            <person name="Lee S.L."/>
            <person name="Liu W."/>
            <person name="Nazareth L.V."/>
            <person name="Wang Q."/>
            <person name="Zhou J."/>
            <person name="Kaplan S.L."/>
            <person name="Weinstock G.M."/>
        </authorList>
    </citation>
    <scope>NUCLEOTIDE SEQUENCE [LARGE SCALE GENOMIC DNA]</scope>
    <source>
        <strain>USA300 / TCH1516</strain>
    </source>
</reference>
<dbReference type="EMBL" id="CP000730">
    <property type="protein sequence ID" value="ABX29215.1"/>
    <property type="molecule type" value="Genomic_DNA"/>
</dbReference>
<dbReference type="RefSeq" id="WP_000043634.1">
    <property type="nucleotide sequence ID" value="NC_010079.1"/>
</dbReference>
<dbReference type="SMR" id="A8Z3U9"/>
<dbReference type="KEGG" id="sax:USA300HOU_1201"/>
<dbReference type="HOGENOM" id="CLU_006301_5_1_9"/>
<dbReference type="GO" id="GO:0005829">
    <property type="term" value="C:cytosol"/>
    <property type="evidence" value="ECO:0007669"/>
    <property type="project" value="TreeGrafter"/>
</dbReference>
<dbReference type="GO" id="GO:0005525">
    <property type="term" value="F:GTP binding"/>
    <property type="evidence" value="ECO:0007669"/>
    <property type="project" value="UniProtKB-KW"/>
</dbReference>
<dbReference type="GO" id="GO:0003924">
    <property type="term" value="F:GTPase activity"/>
    <property type="evidence" value="ECO:0007669"/>
    <property type="project" value="UniProtKB-UniRule"/>
</dbReference>
<dbReference type="GO" id="GO:0003743">
    <property type="term" value="F:translation initiation factor activity"/>
    <property type="evidence" value="ECO:0007669"/>
    <property type="project" value="UniProtKB-UniRule"/>
</dbReference>
<dbReference type="CDD" id="cd01887">
    <property type="entry name" value="IF2_eIF5B"/>
    <property type="match status" value="1"/>
</dbReference>
<dbReference type="CDD" id="cd03702">
    <property type="entry name" value="IF2_mtIF2_II"/>
    <property type="match status" value="1"/>
</dbReference>
<dbReference type="CDD" id="cd03692">
    <property type="entry name" value="mtIF2_IVc"/>
    <property type="match status" value="1"/>
</dbReference>
<dbReference type="FunFam" id="1.10.10.2480:FF:000002">
    <property type="entry name" value="Translation initiation factor IF-2"/>
    <property type="match status" value="1"/>
</dbReference>
<dbReference type="FunFam" id="2.40.30.10:FF:000007">
    <property type="entry name" value="Translation initiation factor IF-2"/>
    <property type="match status" value="1"/>
</dbReference>
<dbReference type="FunFam" id="2.40.30.10:FF:000008">
    <property type="entry name" value="Translation initiation factor IF-2"/>
    <property type="match status" value="1"/>
</dbReference>
<dbReference type="FunFam" id="3.40.50.10050:FF:000001">
    <property type="entry name" value="Translation initiation factor IF-2"/>
    <property type="match status" value="1"/>
</dbReference>
<dbReference type="FunFam" id="3.40.50.300:FF:000019">
    <property type="entry name" value="Translation initiation factor IF-2"/>
    <property type="match status" value="1"/>
</dbReference>
<dbReference type="Gene3D" id="1.10.10.2480">
    <property type="match status" value="1"/>
</dbReference>
<dbReference type="Gene3D" id="3.40.50.300">
    <property type="entry name" value="P-loop containing nucleotide triphosphate hydrolases"/>
    <property type="match status" value="1"/>
</dbReference>
<dbReference type="Gene3D" id="2.40.30.10">
    <property type="entry name" value="Translation factors"/>
    <property type="match status" value="2"/>
</dbReference>
<dbReference type="Gene3D" id="3.40.50.10050">
    <property type="entry name" value="Translation initiation factor IF- 2, domain 3"/>
    <property type="match status" value="1"/>
</dbReference>
<dbReference type="HAMAP" id="MF_00100_B">
    <property type="entry name" value="IF_2_B"/>
    <property type="match status" value="1"/>
</dbReference>
<dbReference type="InterPro" id="IPR053905">
    <property type="entry name" value="EF-G-like_DII"/>
</dbReference>
<dbReference type="InterPro" id="IPR044145">
    <property type="entry name" value="IF2_II"/>
</dbReference>
<dbReference type="InterPro" id="IPR006847">
    <property type="entry name" value="IF2_N"/>
</dbReference>
<dbReference type="InterPro" id="IPR027417">
    <property type="entry name" value="P-loop_NTPase"/>
</dbReference>
<dbReference type="InterPro" id="IPR005225">
    <property type="entry name" value="Small_GTP-bd"/>
</dbReference>
<dbReference type="InterPro" id="IPR000795">
    <property type="entry name" value="T_Tr_GTP-bd_dom"/>
</dbReference>
<dbReference type="InterPro" id="IPR000178">
    <property type="entry name" value="TF_IF2_bacterial-like"/>
</dbReference>
<dbReference type="InterPro" id="IPR015760">
    <property type="entry name" value="TIF_IF2"/>
</dbReference>
<dbReference type="InterPro" id="IPR023115">
    <property type="entry name" value="TIF_IF2_dom3"/>
</dbReference>
<dbReference type="InterPro" id="IPR036925">
    <property type="entry name" value="TIF_IF2_dom3_sf"/>
</dbReference>
<dbReference type="InterPro" id="IPR009000">
    <property type="entry name" value="Transl_B-barrel_sf"/>
</dbReference>
<dbReference type="NCBIfam" id="TIGR00487">
    <property type="entry name" value="IF-2"/>
    <property type="match status" value="1"/>
</dbReference>
<dbReference type="NCBIfam" id="TIGR00231">
    <property type="entry name" value="small_GTP"/>
    <property type="match status" value="1"/>
</dbReference>
<dbReference type="PANTHER" id="PTHR43381:SF5">
    <property type="entry name" value="TR-TYPE G DOMAIN-CONTAINING PROTEIN"/>
    <property type="match status" value="1"/>
</dbReference>
<dbReference type="PANTHER" id="PTHR43381">
    <property type="entry name" value="TRANSLATION INITIATION FACTOR IF-2-RELATED"/>
    <property type="match status" value="1"/>
</dbReference>
<dbReference type="Pfam" id="PF22042">
    <property type="entry name" value="EF-G_D2"/>
    <property type="match status" value="1"/>
</dbReference>
<dbReference type="Pfam" id="PF00009">
    <property type="entry name" value="GTP_EFTU"/>
    <property type="match status" value="1"/>
</dbReference>
<dbReference type="Pfam" id="PF11987">
    <property type="entry name" value="IF-2"/>
    <property type="match status" value="1"/>
</dbReference>
<dbReference type="Pfam" id="PF04760">
    <property type="entry name" value="IF2_N"/>
    <property type="match status" value="2"/>
</dbReference>
<dbReference type="SUPFAM" id="SSF52156">
    <property type="entry name" value="Initiation factor IF2/eIF5b, domain 3"/>
    <property type="match status" value="1"/>
</dbReference>
<dbReference type="SUPFAM" id="SSF52540">
    <property type="entry name" value="P-loop containing nucleoside triphosphate hydrolases"/>
    <property type="match status" value="1"/>
</dbReference>
<dbReference type="SUPFAM" id="SSF50447">
    <property type="entry name" value="Translation proteins"/>
    <property type="match status" value="2"/>
</dbReference>
<dbReference type="PROSITE" id="PS51722">
    <property type="entry name" value="G_TR_2"/>
    <property type="match status" value="1"/>
</dbReference>
<dbReference type="PROSITE" id="PS01176">
    <property type="entry name" value="IF2"/>
    <property type="match status" value="1"/>
</dbReference>
<sequence length="705" mass="77871">MSKQRIYEYAKELNLKSKEIIDELKSMNIEVSNHMQALEDDQIKALDKKFKKEQKNDNKQSTQNNHQKSNNQNQNKGQQKDNKKNQQQNNKGNKGNKKNNRNNKKNNKNNKPQNQPAAPKEIPSKVTYQEGITVGEFADKLNVESSEIIKKLFLLGIVANINQSLNQETIELIADDYGVEVEEEVVINEEDLSIYFEDEKDDPEAIERPAVVTIMGHVDHGKTTLLDSIRHTKVTAGEAGGITQHIGAYQIENDGKKITFLDTPGHAAFTTMRARGAQVTDITILVVAADDGVMPQTIEAINHAKEAEVPIIVAVNKIDKPTSNPDRVMQELTEYGLIPEDWGGETIFVPLSALSGDGIDDLLEMIGLVAEVQELKANPKNRAVGTVIEAELDKSRGPSASLLVQNGTLNVGDAIVVGNTYGRIRAMVNDLGQRIKTAGPSTPVEITGINDVPQAGDRFVVFSDEKQARRIGESRHEASIIQQRQESKNVSLDNLFEQMKQGEMKDLNVIIKGDVQGSVEALAASLMKIDVEGVNVRIIHTAVGAINESDVTLANASNGIIIGFNVRPDSGAKRAAEAENVDMRLHRVIYNVIEEIESAMKGLLDPEFEEQVIGQAEVRQTFKVSKVGTIAGCYVTEGKITRNAGVRIIRDGIVQYEGELDTLKRFKDDAKEVAKGYECGITIENYNDLKEGDVIEAFEMVEIKR</sequence>
<comment type="function">
    <text evidence="2">One of the essential components for the initiation of protein synthesis. Protects formylmethionyl-tRNA from spontaneous hydrolysis and promotes its binding to the 30S ribosomal subunits. Also involved in the hydrolysis of GTP during the formation of the 70S ribosomal complex.</text>
</comment>
<comment type="subcellular location">
    <subcellularLocation>
        <location evidence="2">Cytoplasm</location>
    </subcellularLocation>
</comment>
<comment type="similarity">
    <text evidence="2">Belongs to the TRAFAC class translation factor GTPase superfamily. Classic translation factor GTPase family. IF-2 subfamily.</text>
</comment>
<name>IF2_STAAT</name>
<proteinExistence type="inferred from homology"/>
<evidence type="ECO:0000250" key="1"/>
<evidence type="ECO:0000255" key="2">
    <source>
        <dbReference type="HAMAP-Rule" id="MF_00100"/>
    </source>
</evidence>
<evidence type="ECO:0000256" key="3">
    <source>
        <dbReference type="SAM" id="MobiDB-lite"/>
    </source>
</evidence>
<feature type="chain" id="PRO_1000075624" description="Translation initiation factor IF-2">
    <location>
        <begin position="1"/>
        <end position="705"/>
    </location>
</feature>
<feature type="domain" description="tr-type G">
    <location>
        <begin position="207"/>
        <end position="376"/>
    </location>
</feature>
<feature type="region of interest" description="Disordered" evidence="3">
    <location>
        <begin position="40"/>
        <end position="124"/>
    </location>
</feature>
<feature type="region of interest" description="G1" evidence="1">
    <location>
        <begin position="216"/>
        <end position="223"/>
    </location>
</feature>
<feature type="region of interest" description="G2" evidence="1">
    <location>
        <begin position="241"/>
        <end position="245"/>
    </location>
</feature>
<feature type="region of interest" description="G3" evidence="1">
    <location>
        <begin position="262"/>
        <end position="265"/>
    </location>
</feature>
<feature type="region of interest" description="G4" evidence="1">
    <location>
        <begin position="316"/>
        <end position="319"/>
    </location>
</feature>
<feature type="region of interest" description="G5" evidence="1">
    <location>
        <begin position="352"/>
        <end position="354"/>
    </location>
</feature>
<feature type="compositionally biased region" description="Basic and acidic residues" evidence="3">
    <location>
        <begin position="41"/>
        <end position="58"/>
    </location>
</feature>
<feature type="compositionally biased region" description="Low complexity" evidence="3">
    <location>
        <begin position="59"/>
        <end position="77"/>
    </location>
</feature>
<feature type="compositionally biased region" description="Basic residues" evidence="3">
    <location>
        <begin position="94"/>
        <end position="108"/>
    </location>
</feature>
<feature type="binding site" evidence="2">
    <location>
        <begin position="216"/>
        <end position="223"/>
    </location>
    <ligand>
        <name>GTP</name>
        <dbReference type="ChEBI" id="CHEBI:37565"/>
    </ligand>
</feature>
<feature type="binding site" evidence="2">
    <location>
        <begin position="262"/>
        <end position="266"/>
    </location>
    <ligand>
        <name>GTP</name>
        <dbReference type="ChEBI" id="CHEBI:37565"/>
    </ligand>
</feature>
<feature type="binding site" evidence="2">
    <location>
        <begin position="316"/>
        <end position="319"/>
    </location>
    <ligand>
        <name>GTP</name>
        <dbReference type="ChEBI" id="CHEBI:37565"/>
    </ligand>
</feature>